<organism>
    <name type="scientific">Geobacter sp. (strain M21)</name>
    <dbReference type="NCBI Taxonomy" id="443144"/>
    <lineage>
        <taxon>Bacteria</taxon>
        <taxon>Pseudomonadati</taxon>
        <taxon>Thermodesulfobacteriota</taxon>
        <taxon>Desulfuromonadia</taxon>
        <taxon>Geobacterales</taxon>
        <taxon>Geobacteraceae</taxon>
        <taxon>Geobacter</taxon>
    </lineage>
</organism>
<gene>
    <name evidence="1" type="primary">uvrC</name>
    <name type="ordered locus">GM21_4046</name>
</gene>
<reference key="1">
    <citation type="submission" date="2009-07" db="EMBL/GenBank/DDBJ databases">
        <title>Complete sequence of Geobacter sp. M21.</title>
        <authorList>
            <consortium name="US DOE Joint Genome Institute"/>
            <person name="Lucas S."/>
            <person name="Copeland A."/>
            <person name="Lapidus A."/>
            <person name="Glavina del Rio T."/>
            <person name="Dalin E."/>
            <person name="Tice H."/>
            <person name="Bruce D."/>
            <person name="Goodwin L."/>
            <person name="Pitluck S."/>
            <person name="Saunders E."/>
            <person name="Brettin T."/>
            <person name="Detter J.C."/>
            <person name="Han C."/>
            <person name="Larimer F."/>
            <person name="Land M."/>
            <person name="Hauser L."/>
            <person name="Kyrpides N."/>
            <person name="Ovchinnikova G."/>
            <person name="Lovley D."/>
        </authorList>
    </citation>
    <scope>NUCLEOTIDE SEQUENCE [LARGE SCALE GENOMIC DNA]</scope>
    <source>
        <strain>M21</strain>
    </source>
</reference>
<feature type="chain" id="PRO_1000204122" description="UvrABC system protein C">
    <location>
        <begin position="1"/>
        <end position="649"/>
    </location>
</feature>
<feature type="domain" description="GIY-YIG" evidence="1">
    <location>
        <begin position="12"/>
        <end position="91"/>
    </location>
</feature>
<feature type="domain" description="UVR" evidence="1">
    <location>
        <begin position="201"/>
        <end position="236"/>
    </location>
</feature>
<feature type="region of interest" description="Disordered" evidence="2">
    <location>
        <begin position="603"/>
        <end position="649"/>
    </location>
</feature>
<dbReference type="EMBL" id="CP001661">
    <property type="protein sequence ID" value="ACT20062.1"/>
    <property type="molecule type" value="Genomic_DNA"/>
</dbReference>
<dbReference type="SMR" id="C6E9G2"/>
<dbReference type="STRING" id="443144.GM21_4046"/>
<dbReference type="KEGG" id="gem:GM21_4046"/>
<dbReference type="eggNOG" id="COG0322">
    <property type="taxonomic scope" value="Bacteria"/>
</dbReference>
<dbReference type="HOGENOM" id="CLU_014841_3_2_7"/>
<dbReference type="OrthoDB" id="9804933at2"/>
<dbReference type="GO" id="GO:0005737">
    <property type="term" value="C:cytoplasm"/>
    <property type="evidence" value="ECO:0007669"/>
    <property type="project" value="UniProtKB-SubCell"/>
</dbReference>
<dbReference type="GO" id="GO:0009380">
    <property type="term" value="C:excinuclease repair complex"/>
    <property type="evidence" value="ECO:0007669"/>
    <property type="project" value="InterPro"/>
</dbReference>
<dbReference type="GO" id="GO:0003677">
    <property type="term" value="F:DNA binding"/>
    <property type="evidence" value="ECO:0007669"/>
    <property type="project" value="UniProtKB-UniRule"/>
</dbReference>
<dbReference type="GO" id="GO:0009381">
    <property type="term" value="F:excinuclease ABC activity"/>
    <property type="evidence" value="ECO:0007669"/>
    <property type="project" value="UniProtKB-UniRule"/>
</dbReference>
<dbReference type="GO" id="GO:0006289">
    <property type="term" value="P:nucleotide-excision repair"/>
    <property type="evidence" value="ECO:0007669"/>
    <property type="project" value="UniProtKB-UniRule"/>
</dbReference>
<dbReference type="GO" id="GO:0009432">
    <property type="term" value="P:SOS response"/>
    <property type="evidence" value="ECO:0007669"/>
    <property type="project" value="UniProtKB-UniRule"/>
</dbReference>
<dbReference type="CDD" id="cd10434">
    <property type="entry name" value="GIY-YIG_UvrC_Cho"/>
    <property type="match status" value="1"/>
</dbReference>
<dbReference type="FunFam" id="3.40.1440.10:FF:000001">
    <property type="entry name" value="UvrABC system protein C"/>
    <property type="match status" value="1"/>
</dbReference>
<dbReference type="Gene3D" id="1.10.150.20">
    <property type="entry name" value="5' to 3' exonuclease, C-terminal subdomain"/>
    <property type="match status" value="1"/>
</dbReference>
<dbReference type="Gene3D" id="3.40.1440.10">
    <property type="entry name" value="GIY-YIG endonuclease"/>
    <property type="match status" value="1"/>
</dbReference>
<dbReference type="Gene3D" id="3.30.420.340">
    <property type="entry name" value="UvrC, RNAse H endonuclease domain"/>
    <property type="match status" value="1"/>
</dbReference>
<dbReference type="HAMAP" id="MF_00203">
    <property type="entry name" value="UvrC"/>
    <property type="match status" value="1"/>
</dbReference>
<dbReference type="InterPro" id="IPR000305">
    <property type="entry name" value="GIY-YIG_endonuc"/>
</dbReference>
<dbReference type="InterPro" id="IPR035901">
    <property type="entry name" value="GIY-YIG_endonuc_sf"/>
</dbReference>
<dbReference type="InterPro" id="IPR047296">
    <property type="entry name" value="GIY-YIG_UvrC_Cho"/>
</dbReference>
<dbReference type="InterPro" id="IPR003583">
    <property type="entry name" value="Hlx-hairpin-Hlx_DNA-bd_motif"/>
</dbReference>
<dbReference type="InterPro" id="IPR010994">
    <property type="entry name" value="RuvA_2-like"/>
</dbReference>
<dbReference type="InterPro" id="IPR001943">
    <property type="entry name" value="UVR_dom"/>
</dbReference>
<dbReference type="InterPro" id="IPR036876">
    <property type="entry name" value="UVR_dom_sf"/>
</dbReference>
<dbReference type="InterPro" id="IPR050066">
    <property type="entry name" value="UvrABC_protein_C"/>
</dbReference>
<dbReference type="InterPro" id="IPR004791">
    <property type="entry name" value="UvrC"/>
</dbReference>
<dbReference type="InterPro" id="IPR001162">
    <property type="entry name" value="UvrC_RNase_H_dom"/>
</dbReference>
<dbReference type="InterPro" id="IPR038476">
    <property type="entry name" value="UvrC_RNase_H_dom_sf"/>
</dbReference>
<dbReference type="NCBIfam" id="NF001824">
    <property type="entry name" value="PRK00558.1-5"/>
    <property type="match status" value="1"/>
</dbReference>
<dbReference type="NCBIfam" id="TIGR00194">
    <property type="entry name" value="uvrC"/>
    <property type="match status" value="1"/>
</dbReference>
<dbReference type="PANTHER" id="PTHR30562:SF1">
    <property type="entry name" value="UVRABC SYSTEM PROTEIN C"/>
    <property type="match status" value="1"/>
</dbReference>
<dbReference type="PANTHER" id="PTHR30562">
    <property type="entry name" value="UVRC/OXIDOREDUCTASE"/>
    <property type="match status" value="1"/>
</dbReference>
<dbReference type="Pfam" id="PF01541">
    <property type="entry name" value="GIY-YIG"/>
    <property type="match status" value="1"/>
</dbReference>
<dbReference type="Pfam" id="PF14520">
    <property type="entry name" value="HHH_5"/>
    <property type="match status" value="1"/>
</dbReference>
<dbReference type="Pfam" id="PF02151">
    <property type="entry name" value="UVR"/>
    <property type="match status" value="1"/>
</dbReference>
<dbReference type="Pfam" id="PF22920">
    <property type="entry name" value="UvrC_RNaseH"/>
    <property type="match status" value="1"/>
</dbReference>
<dbReference type="Pfam" id="PF08459">
    <property type="entry name" value="UvrC_RNaseH_dom"/>
    <property type="match status" value="1"/>
</dbReference>
<dbReference type="SMART" id="SM00465">
    <property type="entry name" value="GIYc"/>
    <property type="match status" value="1"/>
</dbReference>
<dbReference type="SMART" id="SM00278">
    <property type="entry name" value="HhH1"/>
    <property type="match status" value="2"/>
</dbReference>
<dbReference type="SUPFAM" id="SSF46600">
    <property type="entry name" value="C-terminal UvrC-binding domain of UvrB"/>
    <property type="match status" value="1"/>
</dbReference>
<dbReference type="SUPFAM" id="SSF82771">
    <property type="entry name" value="GIY-YIG endonuclease"/>
    <property type="match status" value="1"/>
</dbReference>
<dbReference type="SUPFAM" id="SSF47781">
    <property type="entry name" value="RuvA domain 2-like"/>
    <property type="match status" value="1"/>
</dbReference>
<dbReference type="PROSITE" id="PS50164">
    <property type="entry name" value="GIY_YIG"/>
    <property type="match status" value="1"/>
</dbReference>
<dbReference type="PROSITE" id="PS50151">
    <property type="entry name" value="UVR"/>
    <property type="match status" value="1"/>
</dbReference>
<dbReference type="PROSITE" id="PS50165">
    <property type="entry name" value="UVRC"/>
    <property type="match status" value="1"/>
</dbReference>
<evidence type="ECO:0000255" key="1">
    <source>
        <dbReference type="HAMAP-Rule" id="MF_00203"/>
    </source>
</evidence>
<evidence type="ECO:0000256" key="2">
    <source>
        <dbReference type="SAM" id="MobiDB-lite"/>
    </source>
</evidence>
<sequence>MITQAMIENFPSSPGVYLMKSADDTVIYVGKARNLKKRVRSYAGDTRDSRIHIRFMVQLVHSVDYLVTDTEKEALILENTLIKQHRPKYNINLRDDKTYFSLRMDMKEQFPRLSIVRKIPSDGARYFGPYASATAAKEVLKQLYKMFPLRHYPLATCMARKRPCLYHQIKQCSAPCCGLISAAEYAALAQGAALFLEGKNNEVARLYRSKMNLASEQMRYEDAARYRDLLRAIEVTVERQKMVAQSGDSDVFGVHREADRMQIALLHIRGGTLTGGRSFLFDWELETEEGLASFLNEYYDLDAPIPPQVLIPLPIAEPAALEELLSEKAGKKVTIAVPQRGPKLEMVKLAGKNAETAAQERLARESSSATLLTELAEKLNLPHPPRRIECYDISNIQGEMAVGSRVVFIDGRADKSLYRRYRIKGVLQSDDFAMMREVLSRRFKADSHEEKPDLIVVDGGLGQLGVLNAVLDELEVTGVEAAGLAKSRVARDMESEEIERSDERVFRPGRKNAIALRQSSAPLLLLVRIRDEAHRFAVTYHKDVRSKVLTGSELDGVAGIGEKRKKALLKHFGSLKRVKEATLEELKGAPGMTESAARALVERLHGGPLPNPPPPGEGAMGDGSIPSPRNGVMDDSIPSPSGRGWPKAG</sequence>
<accession>C6E9G2</accession>
<proteinExistence type="inferred from homology"/>
<protein>
    <recommendedName>
        <fullName evidence="1">UvrABC system protein C</fullName>
        <shortName evidence="1">Protein UvrC</shortName>
    </recommendedName>
    <alternativeName>
        <fullName evidence="1">Excinuclease ABC subunit C</fullName>
    </alternativeName>
</protein>
<keyword id="KW-0963">Cytoplasm</keyword>
<keyword id="KW-0227">DNA damage</keyword>
<keyword id="KW-0228">DNA excision</keyword>
<keyword id="KW-0234">DNA repair</keyword>
<keyword id="KW-0267">Excision nuclease</keyword>
<keyword id="KW-0742">SOS response</keyword>
<name>UVRC_GEOSM</name>
<comment type="function">
    <text evidence="1">The UvrABC repair system catalyzes the recognition and processing of DNA lesions. UvrC both incises the 5' and 3' sides of the lesion. The N-terminal half is responsible for the 3' incision and the C-terminal half is responsible for the 5' incision.</text>
</comment>
<comment type="subunit">
    <text evidence="1">Interacts with UvrB in an incision complex.</text>
</comment>
<comment type="subcellular location">
    <subcellularLocation>
        <location evidence="1">Cytoplasm</location>
    </subcellularLocation>
</comment>
<comment type="similarity">
    <text evidence="1">Belongs to the UvrC family.</text>
</comment>